<dbReference type="EC" id="2.5.1.141" evidence="1"/>
<dbReference type="EMBL" id="CP000943">
    <property type="protein sequence ID" value="ACA16806.1"/>
    <property type="molecule type" value="Genomic_DNA"/>
</dbReference>
<dbReference type="RefSeq" id="WP_012332215.1">
    <property type="nucleotide sequence ID" value="NC_010511.1"/>
</dbReference>
<dbReference type="SMR" id="B0UFS2"/>
<dbReference type="STRING" id="426117.M446_2347"/>
<dbReference type="KEGG" id="met:M446_2347"/>
<dbReference type="eggNOG" id="COG0109">
    <property type="taxonomic scope" value="Bacteria"/>
</dbReference>
<dbReference type="HOGENOM" id="CLU_029631_0_2_5"/>
<dbReference type="UniPathway" id="UPA00834">
    <property type="reaction ID" value="UER00712"/>
</dbReference>
<dbReference type="GO" id="GO:0005886">
    <property type="term" value="C:plasma membrane"/>
    <property type="evidence" value="ECO:0007669"/>
    <property type="project" value="UniProtKB-SubCell"/>
</dbReference>
<dbReference type="GO" id="GO:0008495">
    <property type="term" value="F:protoheme IX farnesyltransferase activity"/>
    <property type="evidence" value="ECO:0007669"/>
    <property type="project" value="UniProtKB-UniRule"/>
</dbReference>
<dbReference type="GO" id="GO:0048034">
    <property type="term" value="P:heme O biosynthetic process"/>
    <property type="evidence" value="ECO:0007669"/>
    <property type="project" value="UniProtKB-UniRule"/>
</dbReference>
<dbReference type="CDD" id="cd13957">
    <property type="entry name" value="PT_UbiA_Cox10"/>
    <property type="match status" value="1"/>
</dbReference>
<dbReference type="Gene3D" id="1.10.357.140">
    <property type="entry name" value="UbiA prenyltransferase"/>
    <property type="match status" value="1"/>
</dbReference>
<dbReference type="HAMAP" id="MF_00154">
    <property type="entry name" value="CyoE_CtaB"/>
    <property type="match status" value="1"/>
</dbReference>
<dbReference type="InterPro" id="IPR006369">
    <property type="entry name" value="Protohaem_IX_farnesylTrfase"/>
</dbReference>
<dbReference type="InterPro" id="IPR000537">
    <property type="entry name" value="UbiA_prenyltransferase"/>
</dbReference>
<dbReference type="InterPro" id="IPR044878">
    <property type="entry name" value="UbiA_sf"/>
</dbReference>
<dbReference type="NCBIfam" id="TIGR01473">
    <property type="entry name" value="cyoE_ctaB"/>
    <property type="match status" value="1"/>
</dbReference>
<dbReference type="NCBIfam" id="NF003349">
    <property type="entry name" value="PRK04375.1-2"/>
    <property type="match status" value="1"/>
</dbReference>
<dbReference type="PANTHER" id="PTHR43448:SF7">
    <property type="entry name" value="4-HYDROXYBENZOATE SOLANESYLTRANSFERASE"/>
    <property type="match status" value="1"/>
</dbReference>
<dbReference type="PANTHER" id="PTHR43448">
    <property type="entry name" value="PROTOHEME IX FARNESYLTRANSFERASE, MITOCHONDRIAL"/>
    <property type="match status" value="1"/>
</dbReference>
<dbReference type="Pfam" id="PF01040">
    <property type="entry name" value="UbiA"/>
    <property type="match status" value="1"/>
</dbReference>
<protein>
    <recommendedName>
        <fullName evidence="1">Protoheme IX farnesyltransferase</fullName>
        <ecNumber evidence="1">2.5.1.141</ecNumber>
    </recommendedName>
    <alternativeName>
        <fullName evidence="1">Heme B farnesyltransferase</fullName>
    </alternativeName>
    <alternativeName>
        <fullName evidence="1">Heme O synthase</fullName>
    </alternativeName>
</protein>
<feature type="chain" id="PRO_0000346059" description="Protoheme IX farnesyltransferase">
    <location>
        <begin position="1"/>
        <end position="317"/>
    </location>
</feature>
<feature type="transmembrane region" description="Helical" evidence="1">
    <location>
        <begin position="25"/>
        <end position="45"/>
    </location>
</feature>
<feature type="transmembrane region" description="Helical" evidence="1">
    <location>
        <begin position="54"/>
        <end position="74"/>
    </location>
</feature>
<feature type="transmembrane region" description="Helical" evidence="1">
    <location>
        <begin position="126"/>
        <end position="146"/>
    </location>
</feature>
<feature type="transmembrane region" description="Helical" evidence="1">
    <location>
        <begin position="154"/>
        <end position="174"/>
    </location>
</feature>
<feature type="transmembrane region" description="Helical" evidence="1">
    <location>
        <begin position="181"/>
        <end position="201"/>
    </location>
</feature>
<feature type="transmembrane region" description="Helical" evidence="1">
    <location>
        <begin position="227"/>
        <end position="244"/>
    </location>
</feature>
<feature type="transmembrane region" description="Helical" evidence="1">
    <location>
        <begin position="249"/>
        <end position="271"/>
    </location>
</feature>
<feature type="transmembrane region" description="Helical" evidence="1">
    <location>
        <begin position="281"/>
        <end position="301"/>
    </location>
</feature>
<reference key="1">
    <citation type="submission" date="2008-02" db="EMBL/GenBank/DDBJ databases">
        <title>Complete sequence of chromosome of Methylobacterium sp. 4-46.</title>
        <authorList>
            <consortium name="US DOE Joint Genome Institute"/>
            <person name="Copeland A."/>
            <person name="Lucas S."/>
            <person name="Lapidus A."/>
            <person name="Glavina del Rio T."/>
            <person name="Dalin E."/>
            <person name="Tice H."/>
            <person name="Bruce D."/>
            <person name="Goodwin L."/>
            <person name="Pitluck S."/>
            <person name="Chertkov O."/>
            <person name="Brettin T."/>
            <person name="Detter J.C."/>
            <person name="Han C."/>
            <person name="Kuske C.R."/>
            <person name="Schmutz J."/>
            <person name="Larimer F."/>
            <person name="Land M."/>
            <person name="Hauser L."/>
            <person name="Kyrpides N."/>
            <person name="Ivanova N."/>
            <person name="Marx C.J."/>
            <person name="Richardson P."/>
        </authorList>
    </citation>
    <scope>NUCLEOTIDE SEQUENCE [LARGE SCALE GENOMIC DNA]</scope>
    <source>
        <strain>4-46</strain>
    </source>
</reference>
<organism>
    <name type="scientific">Methylobacterium sp. (strain 4-46)</name>
    <dbReference type="NCBI Taxonomy" id="426117"/>
    <lineage>
        <taxon>Bacteria</taxon>
        <taxon>Pseudomonadati</taxon>
        <taxon>Pseudomonadota</taxon>
        <taxon>Alphaproteobacteria</taxon>
        <taxon>Hyphomicrobiales</taxon>
        <taxon>Methylobacteriaceae</taxon>
        <taxon>Methylobacterium</taxon>
    </lineage>
</organism>
<evidence type="ECO:0000255" key="1">
    <source>
        <dbReference type="HAMAP-Rule" id="MF_00154"/>
    </source>
</evidence>
<proteinExistence type="inferred from homology"/>
<accession>B0UFS2</accession>
<sequence>MTSLTNSLNPARSLAPASNGDVADFFALLKPRVMALVIFTALVGMTVTKSHVNPVIAAVSLLMIAVGAGASGCLNMWWDADVDAVMSRTRTRPIPAGKIRPDEALAFGMTLSVGSVLMLGLAANWLAAGLLAFTIAFYAVIYSMWLKRATAQNIVIGGAAGALPPMIGQAVVTGTVGIEGLVLFLIIFVWTPPHFWALALVKSGDYAKAGIPMMPNVAGPDSTRRQIVAYTLLLAPLGLAPVALGFGGLIYGLVALLGGLAMLALSLQVYHRREGEGADKAAMGLFGFSILYLFLLFSALLAEQGLGLFRPVSQLFG</sequence>
<gene>
    <name evidence="1" type="primary">ctaB</name>
    <name type="ordered locus">M446_2347</name>
</gene>
<comment type="function">
    <text evidence="1">Converts heme B (protoheme IX) to heme O by substitution of the vinyl group on carbon 2 of heme B porphyrin ring with a hydroxyethyl farnesyl side group.</text>
</comment>
<comment type="catalytic activity">
    <reaction evidence="1">
        <text>heme b + (2E,6E)-farnesyl diphosphate + H2O = Fe(II)-heme o + diphosphate</text>
        <dbReference type="Rhea" id="RHEA:28070"/>
        <dbReference type="ChEBI" id="CHEBI:15377"/>
        <dbReference type="ChEBI" id="CHEBI:33019"/>
        <dbReference type="ChEBI" id="CHEBI:60344"/>
        <dbReference type="ChEBI" id="CHEBI:60530"/>
        <dbReference type="ChEBI" id="CHEBI:175763"/>
        <dbReference type="EC" id="2.5.1.141"/>
    </reaction>
</comment>
<comment type="pathway">
    <text evidence="1">Porphyrin-containing compound metabolism; heme O biosynthesis; heme O from protoheme: step 1/1.</text>
</comment>
<comment type="subcellular location">
    <subcellularLocation>
        <location evidence="1">Cell inner membrane</location>
        <topology evidence="1">Multi-pass membrane protein</topology>
    </subcellularLocation>
</comment>
<comment type="miscellaneous">
    <text evidence="1">Carbon 2 of the heme B porphyrin ring is defined according to the Fischer nomenclature.</text>
</comment>
<comment type="similarity">
    <text evidence="1">Belongs to the UbiA prenyltransferase family. Protoheme IX farnesyltransferase subfamily.</text>
</comment>
<keyword id="KW-0997">Cell inner membrane</keyword>
<keyword id="KW-1003">Cell membrane</keyword>
<keyword id="KW-0350">Heme biosynthesis</keyword>
<keyword id="KW-0472">Membrane</keyword>
<keyword id="KW-0808">Transferase</keyword>
<keyword id="KW-0812">Transmembrane</keyword>
<keyword id="KW-1133">Transmembrane helix</keyword>
<name>COXX_METS4</name>